<dbReference type="EMBL" id="L77117">
    <property type="protein sequence ID" value="AAB98821.1"/>
    <property type="molecule type" value="Genomic_DNA"/>
</dbReference>
<dbReference type="EMBL" id="AJ311636">
    <property type="protein sequence ID" value="CAC84089.1"/>
    <property type="molecule type" value="Genomic_DNA"/>
</dbReference>
<dbReference type="PIR" id="F64402">
    <property type="entry name" value="F64402"/>
</dbReference>
<dbReference type="RefSeq" id="WP_010870333.1">
    <property type="nucleotide sequence ID" value="NC_000909.1"/>
</dbReference>
<dbReference type="SMR" id="Q58232"/>
<dbReference type="STRING" id="243232.MJ_0822"/>
<dbReference type="GlyCosmos" id="Q58232">
    <property type="glycosylation" value="7 sites, No reported glycans"/>
</dbReference>
<dbReference type="PaxDb" id="243232-MJ_0822"/>
<dbReference type="DNASU" id="1451705"/>
<dbReference type="EnsemblBacteria" id="AAB98821">
    <property type="protein sequence ID" value="AAB98821"/>
    <property type="gene ID" value="MJ_0822"/>
</dbReference>
<dbReference type="GeneID" id="1451705"/>
<dbReference type="KEGG" id="mja:MJ_0822"/>
<dbReference type="eggNOG" id="arCOG03418">
    <property type="taxonomic scope" value="Archaea"/>
</dbReference>
<dbReference type="HOGENOM" id="CLU_016296_0_0_2"/>
<dbReference type="InParanoid" id="Q58232"/>
<dbReference type="OrthoDB" id="92388at2157"/>
<dbReference type="PhylomeDB" id="Q58232"/>
<dbReference type="Proteomes" id="UP000000805">
    <property type="component" value="Chromosome"/>
</dbReference>
<dbReference type="GO" id="GO:0005576">
    <property type="term" value="C:extracellular region"/>
    <property type="evidence" value="ECO:0007669"/>
    <property type="project" value="UniProtKB-KW"/>
</dbReference>
<dbReference type="GO" id="GO:0030115">
    <property type="term" value="C:S-layer"/>
    <property type="evidence" value="ECO:0007669"/>
    <property type="project" value="UniProtKB-SubCell"/>
</dbReference>
<dbReference type="GO" id="GO:0071555">
    <property type="term" value="P:cell wall organization"/>
    <property type="evidence" value="ECO:0007669"/>
    <property type="project" value="UniProtKB-KW"/>
</dbReference>
<dbReference type="Gene3D" id="2.60.98.40">
    <property type="match status" value="1"/>
</dbReference>
<dbReference type="InterPro" id="IPR022651">
    <property type="entry name" value="S_layer_C"/>
</dbReference>
<dbReference type="InterPro" id="IPR022650">
    <property type="entry name" value="S_layer_central"/>
</dbReference>
<dbReference type="InterPro" id="IPR006454">
    <property type="entry name" value="S_layer_MJ"/>
</dbReference>
<dbReference type="NCBIfam" id="TIGR01564">
    <property type="entry name" value="S_layer_MJ"/>
    <property type="match status" value="1"/>
</dbReference>
<dbReference type="Pfam" id="PF05124">
    <property type="entry name" value="S_layer_C"/>
    <property type="match status" value="1"/>
</dbReference>
<dbReference type="Pfam" id="PF05123">
    <property type="entry name" value="S_layer_N"/>
    <property type="match status" value="1"/>
</dbReference>
<keyword id="KW-0134">Cell wall</keyword>
<keyword id="KW-0961">Cell wall biogenesis/degradation</keyword>
<keyword id="KW-0903">Direct protein sequencing</keyword>
<keyword id="KW-0325">Glycoprotein</keyword>
<keyword id="KW-1185">Reference proteome</keyword>
<keyword id="KW-0701">S-layer</keyword>
<keyword id="KW-0964">Secreted</keyword>
<keyword id="KW-0732">Signal</keyword>
<reference key="1">
    <citation type="journal article" date="1996" name="Science">
        <title>Complete genome sequence of the methanogenic archaeon, Methanococcus jannaschii.</title>
        <authorList>
            <person name="Bult C.J."/>
            <person name="White O."/>
            <person name="Olsen G.J."/>
            <person name="Zhou L."/>
            <person name="Fleischmann R.D."/>
            <person name="Sutton G.G."/>
            <person name="Blake J.A."/>
            <person name="FitzGerald L.M."/>
            <person name="Clayton R.A."/>
            <person name="Gocayne J.D."/>
            <person name="Kerlavage A.R."/>
            <person name="Dougherty B.A."/>
            <person name="Tomb J.-F."/>
            <person name="Adams M.D."/>
            <person name="Reich C.I."/>
            <person name="Overbeek R."/>
            <person name="Kirkness E.F."/>
            <person name="Weinstock K.G."/>
            <person name="Merrick J.M."/>
            <person name="Glodek A."/>
            <person name="Scott J.L."/>
            <person name="Geoghagen N.S.M."/>
            <person name="Weidman J.F."/>
            <person name="Fuhrmann J.L."/>
            <person name="Nguyen D."/>
            <person name="Utterback T.R."/>
            <person name="Kelley J.M."/>
            <person name="Peterson J.D."/>
            <person name="Sadow P.W."/>
            <person name="Hanna M.C."/>
            <person name="Cotton M.D."/>
            <person name="Roberts K.M."/>
            <person name="Hurst M.A."/>
            <person name="Kaine B.P."/>
            <person name="Borodovsky M."/>
            <person name="Klenk H.-P."/>
            <person name="Fraser C.M."/>
            <person name="Smith H.O."/>
            <person name="Woese C.R."/>
            <person name="Venter J.C."/>
        </authorList>
    </citation>
    <scope>NUCLEOTIDE SEQUENCE [LARGE SCALE GENOMIC DNA]</scope>
    <source>
        <strain>ATCC 43067 / DSM 2661 / JAL-1 / JCM 10045 / NBRC 100440</strain>
    </source>
</reference>
<reference key="2">
    <citation type="journal article" date="2002" name="Extremophiles">
        <title>Genes and derived amino acid sequences of S-layer proteins from mesophilic, thermophilic, and extremely thermophilic methanococci.</title>
        <authorList>
            <person name="Akca E."/>
            <person name="Claus H."/>
            <person name="Schultz N."/>
            <person name="Karbach G."/>
            <person name="Schlott B."/>
            <person name="Debaerdemaeker T."/>
            <person name="Declercq J.P."/>
            <person name="Konig H."/>
        </authorList>
    </citation>
    <scope>NUCLEOTIDE SEQUENCE [GENOMIC DNA]</scope>
    <scope>PROTEIN SEQUENCE OF 29-38</scope>
    <scope>FUNCTION</scope>
    <scope>SUBCELLULAR LOCATION</scope>
    <source>
        <strain>ATCC 43067 / DSM 2661 / JAL-1 / JCM 10045 / NBRC 100440</strain>
    </source>
</reference>
<reference key="3">
    <citation type="thesis" date="2000" institute="University of Illinois" country="United States">
        <title>Archaeal gene identification.</title>
        <authorList>
            <person name="Graham D.E."/>
        </authorList>
    </citation>
    <scope>PROTEIN SEQUENCE OF 29-39</scope>
    <source>
        <strain>ATCC 43067 / DSM 2661 / JAL-1 / JCM 10045 / NBRC 100440</strain>
    </source>
</reference>
<evidence type="ECO:0000255" key="1">
    <source>
        <dbReference type="PROSITE-ProRule" id="PRU00498"/>
    </source>
</evidence>
<evidence type="ECO:0000269" key="2">
    <source>
    </source>
</evidence>
<evidence type="ECO:0000269" key="3">
    <source ref="3"/>
</evidence>
<evidence type="ECO:0000303" key="4">
    <source>
    </source>
</evidence>
<evidence type="ECO:0000305" key="5"/>
<sequence>MAMSLKKIGAIAVGGAMVATALASGVAAEVTTSGFSDYKELKDILVKDGQPNCYVVVGADAPSTMDVVSAADIAAKIGSLCYKEGTVEDGSADITVHAEANSDDFDLKKDWNNSAMPANAYALFVAASDGDYSEKFENDTGKPSFMDNGVLGDADKINKTVDLGDIATMMKVDDVDPSDWYDSDDDAGEIVMVELKNDTSDGFTVYKKNMLYETLVYKDDEENFANTTKMEEGMRIPFLGKEMVVVDIDKDDDAIYLGTPVYDGIIKEGETYDLGNGYQVKIKAILKTTVNNTDVYKVDVQILKDGKVVAEKYDKAPLELEYKDDVGVTVHKAWENVGGDYGYAELVISKDLKKLELDEEYVTDWKAYAVLNDNGTMKLEDDLNDNNVDKVVGIALRYDGDKLDDLDSGDEVDILDYVKFKLDDEDSNDKLKVYFSMDKDVDATLNIGEKVKALNAEVKLKDIKANAVEPVSLTAPIAKLDTEVSLDTADKNLVLVGGPVANKLTKELVDAGKLALDNNSPATIALIPDAANGHDVIVVAGGDREKTREAALELIKNL</sequence>
<accession>Q58232</accession>
<name>CSG_METJA</name>
<comment type="function">
    <text evidence="2">S-layer protein. The S-layer is a paracrystalline mono-layered assembly of proteins which coat the surface of the cell.</text>
</comment>
<comment type="subcellular location">
    <subcellularLocation>
        <location evidence="2">Secreted</location>
        <location evidence="2">Cell wall</location>
        <location evidence="2">S-layer</location>
    </subcellularLocation>
</comment>
<comment type="similarity">
    <text evidence="5">Belongs to the Mj S-layer protein family.</text>
</comment>
<organism>
    <name type="scientific">Methanocaldococcus jannaschii (strain ATCC 43067 / DSM 2661 / JAL-1 / JCM 10045 / NBRC 100440)</name>
    <name type="common">Methanococcus jannaschii</name>
    <dbReference type="NCBI Taxonomy" id="243232"/>
    <lineage>
        <taxon>Archaea</taxon>
        <taxon>Methanobacteriati</taxon>
        <taxon>Methanobacteriota</taxon>
        <taxon>Methanomada group</taxon>
        <taxon>Methanococci</taxon>
        <taxon>Methanococcales</taxon>
        <taxon>Methanocaldococcaceae</taxon>
        <taxon>Methanocaldococcus</taxon>
    </lineage>
</organism>
<proteinExistence type="evidence at protein level"/>
<protein>
    <recommendedName>
        <fullName evidence="4">S-layer protein</fullName>
    </recommendedName>
    <alternativeName>
        <fullName evidence="5">Cell surface glycoprotein</fullName>
    </alternativeName>
    <alternativeName>
        <fullName>Surface layer protein</fullName>
    </alternativeName>
</protein>
<gene>
    <name type="primary">sla</name>
    <name type="synonym">slmJ1</name>
    <name type="ordered locus">MJ0822</name>
</gene>
<feature type="signal peptide" evidence="2 3">
    <location>
        <begin position="1"/>
        <end position="28"/>
    </location>
</feature>
<feature type="chain" id="PRO_0000032620" description="S-layer protein">
    <location>
        <begin position="29"/>
        <end position="558"/>
    </location>
</feature>
<feature type="glycosylation site" description="N-linked (GlcNAc...) asparagine" evidence="1">
    <location>
        <position position="112"/>
    </location>
</feature>
<feature type="glycosylation site" description="N-linked (GlcNAc...) asparagine" evidence="1">
    <location>
        <position position="138"/>
    </location>
</feature>
<feature type="glycosylation site" description="N-linked (GlcNAc...) asparagine" evidence="1">
    <location>
        <position position="158"/>
    </location>
</feature>
<feature type="glycosylation site" description="N-linked (GlcNAc...) asparagine" evidence="1">
    <location>
        <position position="197"/>
    </location>
</feature>
<feature type="glycosylation site" description="N-linked (GlcNAc...) asparagine" evidence="1">
    <location>
        <position position="226"/>
    </location>
</feature>
<feature type="glycosylation site" description="N-linked (GlcNAc...) asparagine" evidence="1">
    <location>
        <position position="291"/>
    </location>
</feature>
<feature type="glycosylation site" description="N-linked (GlcNAc...) asparagine" evidence="1">
    <location>
        <position position="374"/>
    </location>
</feature>